<sequence length="177" mass="19902">MKKYTMNEMVDITKDMLNKRGVMIEDIARIVQKLQEKYNPNLPLSVCMENVEKVLNKREIIHAVLTGLALDQLAEQKLLPEPLQHLVETDEPLYGIDEIIPLSIVNVYGSIGLTNFGYLDKEKIGIIKELDESPDGIHTFLDDIVAALAAAAASRIAHTHQDLQDEEKEQDEKPVVS</sequence>
<keyword id="KW-0002">3D-structure</keyword>
<keyword id="KW-1185">Reference proteome</keyword>
<protein>
    <recommendedName>
        <fullName>Uncharacterized protein YpjQ</fullName>
    </recommendedName>
</protein>
<gene>
    <name type="primary">ypjQ</name>
    <name type="ordered locus">BSU21830</name>
</gene>
<feature type="chain" id="PRO_0000049707" description="Uncharacterized protein YpjQ">
    <location>
        <begin position="1"/>
        <end position="177"/>
    </location>
</feature>
<feature type="helix" evidence="2">
    <location>
        <begin position="6"/>
        <end position="19"/>
    </location>
</feature>
<feature type="helix" evidence="2">
    <location>
        <begin position="24"/>
        <end position="34"/>
    </location>
</feature>
<feature type="turn" evidence="2">
    <location>
        <begin position="35"/>
        <end position="38"/>
    </location>
</feature>
<feature type="helix" evidence="2">
    <location>
        <begin position="44"/>
        <end position="54"/>
    </location>
</feature>
<feature type="helix" evidence="2">
    <location>
        <begin position="58"/>
        <end position="75"/>
    </location>
</feature>
<feature type="helix" evidence="2">
    <location>
        <begin position="83"/>
        <end position="89"/>
    </location>
</feature>
<feature type="helix" evidence="2">
    <location>
        <begin position="96"/>
        <end position="99"/>
    </location>
</feature>
<feature type="helix" evidence="2">
    <location>
        <begin position="102"/>
        <end position="106"/>
    </location>
</feature>
<feature type="helix" evidence="2">
    <location>
        <begin position="109"/>
        <end position="121"/>
    </location>
</feature>
<feature type="helix" evidence="2">
    <location>
        <begin position="126"/>
        <end position="129"/>
    </location>
</feature>
<feature type="strand" evidence="2">
    <location>
        <begin position="131"/>
        <end position="133"/>
    </location>
</feature>
<feature type="helix" evidence="2">
    <location>
        <begin position="141"/>
        <end position="157"/>
    </location>
</feature>
<feature type="helix" evidence="2">
    <location>
        <begin position="159"/>
        <end position="163"/>
    </location>
</feature>
<evidence type="ECO:0000305" key="1"/>
<evidence type="ECO:0007829" key="2">
    <source>
        <dbReference type="PDB" id="1TLQ"/>
    </source>
</evidence>
<organism>
    <name type="scientific">Bacillus subtilis (strain 168)</name>
    <dbReference type="NCBI Taxonomy" id="224308"/>
    <lineage>
        <taxon>Bacteria</taxon>
        <taxon>Bacillati</taxon>
        <taxon>Bacillota</taxon>
        <taxon>Bacilli</taxon>
        <taxon>Bacillales</taxon>
        <taxon>Bacillaceae</taxon>
        <taxon>Bacillus</taxon>
    </lineage>
</organism>
<proteinExistence type="evidence at protein level"/>
<comment type="similarity">
    <text evidence="1">To B.subtilis YutG.</text>
</comment>
<comment type="sequence caution" evidence="1">
    <conflict type="frameshift">
        <sequence resource="EMBL" id="M20012"/>
    </conflict>
</comment>
<accession>P54173</accession>
<dbReference type="EMBL" id="L77246">
    <property type="protein sequence ID" value="AAA96633.1"/>
    <property type="molecule type" value="Genomic_DNA"/>
</dbReference>
<dbReference type="EMBL" id="M20012">
    <property type="status" value="NOT_ANNOTATED_CDS"/>
    <property type="molecule type" value="Genomic_DNA"/>
</dbReference>
<dbReference type="EMBL" id="AL009126">
    <property type="protein sequence ID" value="CAB14101.1"/>
    <property type="molecule type" value="Genomic_DNA"/>
</dbReference>
<dbReference type="PIR" id="A69938">
    <property type="entry name" value="A69938"/>
</dbReference>
<dbReference type="RefSeq" id="NP_390066.1">
    <property type="nucleotide sequence ID" value="NC_000964.3"/>
</dbReference>
<dbReference type="RefSeq" id="WP_003230797.1">
    <property type="nucleotide sequence ID" value="NZ_OZ025638.1"/>
</dbReference>
<dbReference type="PDB" id="1TLQ">
    <property type="method" value="X-ray"/>
    <property type="resolution" value="2.40 A"/>
    <property type="chains" value="A=2-177"/>
</dbReference>
<dbReference type="PDBsum" id="1TLQ"/>
<dbReference type="SMR" id="P54173"/>
<dbReference type="FunCoup" id="P54173">
    <property type="interactions" value="32"/>
</dbReference>
<dbReference type="STRING" id="224308.BSU21830"/>
<dbReference type="jPOST" id="P54173"/>
<dbReference type="PaxDb" id="224308-BSU21830"/>
<dbReference type="EnsemblBacteria" id="CAB14101">
    <property type="protein sequence ID" value="CAB14101"/>
    <property type="gene ID" value="BSU_21830"/>
</dbReference>
<dbReference type="GeneID" id="939087"/>
<dbReference type="KEGG" id="bsu:BSU21830"/>
<dbReference type="PATRIC" id="fig|224308.179.peg.2385"/>
<dbReference type="eggNOG" id="COG1267">
    <property type="taxonomic scope" value="Bacteria"/>
</dbReference>
<dbReference type="InParanoid" id="P54173"/>
<dbReference type="OrthoDB" id="9793244at2"/>
<dbReference type="PhylomeDB" id="P54173"/>
<dbReference type="BioCyc" id="BSUB:BSU21830-MONOMER"/>
<dbReference type="EvolutionaryTrace" id="P54173"/>
<dbReference type="Proteomes" id="UP000001570">
    <property type="component" value="Chromosome"/>
</dbReference>
<dbReference type="GO" id="GO:0008962">
    <property type="term" value="F:phosphatidylglycerophosphatase activity"/>
    <property type="evidence" value="ECO:0007669"/>
    <property type="project" value="InterPro"/>
</dbReference>
<dbReference type="GO" id="GO:0006629">
    <property type="term" value="P:lipid metabolic process"/>
    <property type="evidence" value="ECO:0007669"/>
    <property type="project" value="InterPro"/>
</dbReference>
<dbReference type="CDD" id="cd06971">
    <property type="entry name" value="PgpA"/>
    <property type="match status" value="1"/>
</dbReference>
<dbReference type="Gene3D" id="1.10.3760.10">
    <property type="entry name" value="PgpA-like"/>
    <property type="match status" value="1"/>
</dbReference>
<dbReference type="InterPro" id="IPR036681">
    <property type="entry name" value="PgpA-like_sf"/>
</dbReference>
<dbReference type="InterPro" id="IPR026038">
    <property type="entry name" value="Put_PGPase"/>
</dbReference>
<dbReference type="InterPro" id="IPR007686">
    <property type="entry name" value="YutG/PgpA"/>
</dbReference>
<dbReference type="Pfam" id="PF04608">
    <property type="entry name" value="PgpA"/>
    <property type="match status" value="1"/>
</dbReference>
<dbReference type="PIRSF" id="PIRSF019587">
    <property type="entry name" value="PGPase"/>
    <property type="match status" value="1"/>
</dbReference>
<dbReference type="SUPFAM" id="SSF101307">
    <property type="entry name" value="YutG-like"/>
    <property type="match status" value="1"/>
</dbReference>
<reference key="1">
    <citation type="journal article" date="1996" name="Microbiology">
        <title>Organization of the Bacillus subtilis 168 chromosome between kdg and the attachment site of the SP beta prophage: use of long accurate PCR and yeast artificial chromosomes for sequencing.</title>
        <authorList>
            <person name="Capuano V."/>
            <person name="Galleron N."/>
            <person name="Pujic P."/>
            <person name="Sorokin A."/>
            <person name="Ehrlich S.D."/>
        </authorList>
    </citation>
    <scope>NUCLEOTIDE SEQUENCE [GENOMIC DNA]</scope>
    <source>
        <strain>168 / Marburg / ATCC 6051 / DSM 10 / JCM 1465 / NBRC 13719 / NCIMB 3610 / NRRL NRS-744 / VKM B-501</strain>
    </source>
</reference>
<reference key="2">
    <citation type="journal article" date="1988" name="Gene">
        <title>Nucleotide sequence of the thymidylate synthase B and dihydrofolate reductase genes contained in one Bacillus subtilis operon.</title>
        <authorList>
            <person name="Iwakura M."/>
            <person name="Kawata M."/>
            <person name="Tsuda K."/>
            <person name="Tanaka T."/>
        </authorList>
    </citation>
    <scope>NUCLEOTIDE SEQUENCE [GENOMIC DNA]</scope>
    <source>
        <strain>168</strain>
    </source>
</reference>
<reference key="3">
    <citation type="journal article" date="1997" name="Nature">
        <title>The complete genome sequence of the Gram-positive bacterium Bacillus subtilis.</title>
        <authorList>
            <person name="Kunst F."/>
            <person name="Ogasawara N."/>
            <person name="Moszer I."/>
            <person name="Albertini A.M."/>
            <person name="Alloni G."/>
            <person name="Azevedo V."/>
            <person name="Bertero M.G."/>
            <person name="Bessieres P."/>
            <person name="Bolotin A."/>
            <person name="Borchert S."/>
            <person name="Borriss R."/>
            <person name="Boursier L."/>
            <person name="Brans A."/>
            <person name="Braun M."/>
            <person name="Brignell S.C."/>
            <person name="Bron S."/>
            <person name="Brouillet S."/>
            <person name="Bruschi C.V."/>
            <person name="Caldwell B."/>
            <person name="Capuano V."/>
            <person name="Carter N.M."/>
            <person name="Choi S.-K."/>
            <person name="Codani J.-J."/>
            <person name="Connerton I.F."/>
            <person name="Cummings N.J."/>
            <person name="Daniel R.A."/>
            <person name="Denizot F."/>
            <person name="Devine K.M."/>
            <person name="Duesterhoeft A."/>
            <person name="Ehrlich S.D."/>
            <person name="Emmerson P.T."/>
            <person name="Entian K.-D."/>
            <person name="Errington J."/>
            <person name="Fabret C."/>
            <person name="Ferrari E."/>
            <person name="Foulger D."/>
            <person name="Fritz C."/>
            <person name="Fujita M."/>
            <person name="Fujita Y."/>
            <person name="Fuma S."/>
            <person name="Galizzi A."/>
            <person name="Galleron N."/>
            <person name="Ghim S.-Y."/>
            <person name="Glaser P."/>
            <person name="Goffeau A."/>
            <person name="Golightly E.J."/>
            <person name="Grandi G."/>
            <person name="Guiseppi G."/>
            <person name="Guy B.J."/>
            <person name="Haga K."/>
            <person name="Haiech J."/>
            <person name="Harwood C.R."/>
            <person name="Henaut A."/>
            <person name="Hilbert H."/>
            <person name="Holsappel S."/>
            <person name="Hosono S."/>
            <person name="Hullo M.-F."/>
            <person name="Itaya M."/>
            <person name="Jones L.-M."/>
            <person name="Joris B."/>
            <person name="Karamata D."/>
            <person name="Kasahara Y."/>
            <person name="Klaerr-Blanchard M."/>
            <person name="Klein C."/>
            <person name="Kobayashi Y."/>
            <person name="Koetter P."/>
            <person name="Koningstein G."/>
            <person name="Krogh S."/>
            <person name="Kumano M."/>
            <person name="Kurita K."/>
            <person name="Lapidus A."/>
            <person name="Lardinois S."/>
            <person name="Lauber J."/>
            <person name="Lazarevic V."/>
            <person name="Lee S.-M."/>
            <person name="Levine A."/>
            <person name="Liu H."/>
            <person name="Masuda S."/>
            <person name="Mauel C."/>
            <person name="Medigue C."/>
            <person name="Medina N."/>
            <person name="Mellado R.P."/>
            <person name="Mizuno M."/>
            <person name="Moestl D."/>
            <person name="Nakai S."/>
            <person name="Noback M."/>
            <person name="Noone D."/>
            <person name="O'Reilly M."/>
            <person name="Ogawa K."/>
            <person name="Ogiwara A."/>
            <person name="Oudega B."/>
            <person name="Park S.-H."/>
            <person name="Parro V."/>
            <person name="Pohl T.M."/>
            <person name="Portetelle D."/>
            <person name="Porwollik S."/>
            <person name="Prescott A.M."/>
            <person name="Presecan E."/>
            <person name="Pujic P."/>
            <person name="Purnelle B."/>
            <person name="Rapoport G."/>
            <person name="Rey M."/>
            <person name="Reynolds S."/>
            <person name="Rieger M."/>
            <person name="Rivolta C."/>
            <person name="Rocha E."/>
            <person name="Roche B."/>
            <person name="Rose M."/>
            <person name="Sadaie Y."/>
            <person name="Sato T."/>
            <person name="Scanlan E."/>
            <person name="Schleich S."/>
            <person name="Schroeter R."/>
            <person name="Scoffone F."/>
            <person name="Sekiguchi J."/>
            <person name="Sekowska A."/>
            <person name="Seror S.J."/>
            <person name="Serror P."/>
            <person name="Shin B.-S."/>
            <person name="Soldo B."/>
            <person name="Sorokin A."/>
            <person name="Tacconi E."/>
            <person name="Takagi T."/>
            <person name="Takahashi H."/>
            <person name="Takemaru K."/>
            <person name="Takeuchi M."/>
            <person name="Tamakoshi A."/>
            <person name="Tanaka T."/>
            <person name="Terpstra P."/>
            <person name="Tognoni A."/>
            <person name="Tosato V."/>
            <person name="Uchiyama S."/>
            <person name="Vandenbol M."/>
            <person name="Vannier F."/>
            <person name="Vassarotti A."/>
            <person name="Viari A."/>
            <person name="Wambutt R."/>
            <person name="Wedler E."/>
            <person name="Wedler H."/>
            <person name="Weitzenegger T."/>
            <person name="Winters P."/>
            <person name="Wipat A."/>
            <person name="Yamamoto H."/>
            <person name="Yamane K."/>
            <person name="Yasumoto K."/>
            <person name="Yata K."/>
            <person name="Yoshida K."/>
            <person name="Yoshikawa H.-F."/>
            <person name="Zumstein E."/>
            <person name="Yoshikawa H."/>
            <person name="Danchin A."/>
        </authorList>
    </citation>
    <scope>NUCLEOTIDE SEQUENCE [LARGE SCALE GENOMIC DNA]</scope>
    <source>
        <strain>168</strain>
    </source>
</reference>
<reference key="4">
    <citation type="submission" date="2005-01" db="PDB data bank">
        <title>Crystal structure of a hypothetical protein from Bacillus subtilis.</title>
        <authorList>
            <consortium name="New York structural genomix research consortium (NYSGXRC)"/>
        </authorList>
    </citation>
    <scope>X-RAY CRYSTALLOGRAPHY (2.4 ANGSTROMS)</scope>
</reference>
<name>YPJQ_BACSU</name>